<protein>
    <recommendedName>
        <fullName evidence="1">Hydroxyethylthiazole kinase</fullName>
        <ecNumber evidence="1">2.7.1.50</ecNumber>
    </recommendedName>
    <alternativeName>
        <fullName evidence="1">4-methyl-5-beta-hydroxyethylthiazole kinase</fullName>
        <shortName evidence="1">TH kinase</shortName>
        <shortName evidence="1">Thz kinase</shortName>
    </alternativeName>
</protein>
<feature type="chain" id="PRO_0000383885" description="Hydroxyethylthiazole kinase">
    <location>
        <begin position="1"/>
        <end position="261"/>
    </location>
</feature>
<feature type="binding site" evidence="1">
    <location>
        <position position="39"/>
    </location>
    <ligand>
        <name>substrate</name>
    </ligand>
</feature>
<feature type="binding site" evidence="1">
    <location>
        <position position="115"/>
    </location>
    <ligand>
        <name>ATP</name>
        <dbReference type="ChEBI" id="CHEBI:30616"/>
    </ligand>
</feature>
<feature type="binding site" evidence="1">
    <location>
        <position position="159"/>
    </location>
    <ligand>
        <name>ATP</name>
        <dbReference type="ChEBI" id="CHEBI:30616"/>
    </ligand>
</feature>
<feature type="binding site" evidence="1">
    <location>
        <position position="186"/>
    </location>
    <ligand>
        <name>substrate</name>
    </ligand>
</feature>
<proteinExistence type="inferred from homology"/>
<reference key="1">
    <citation type="journal article" date="2009" name="J. Bacteriol.">
        <title>Complete genome sequence of Macrococcus caseolyticus strain JCSCS5402, reflecting the ancestral genome of the human-pathogenic staphylococci.</title>
        <authorList>
            <person name="Baba T."/>
            <person name="Kuwahara-Arai K."/>
            <person name="Uchiyama I."/>
            <person name="Takeuchi F."/>
            <person name="Ito T."/>
            <person name="Hiramatsu K."/>
        </authorList>
    </citation>
    <scope>NUCLEOTIDE SEQUENCE [LARGE SCALE GENOMIC DNA]</scope>
    <source>
        <strain>JCSC5402</strain>
    </source>
</reference>
<evidence type="ECO:0000255" key="1">
    <source>
        <dbReference type="HAMAP-Rule" id="MF_00228"/>
    </source>
</evidence>
<comment type="function">
    <text evidence="1">Catalyzes the phosphorylation of the hydroxyl group of 4-methyl-5-beta-hydroxyethylthiazole (THZ).</text>
</comment>
<comment type="catalytic activity">
    <reaction evidence="1">
        <text>5-(2-hydroxyethyl)-4-methylthiazole + ATP = 4-methyl-5-(2-phosphooxyethyl)-thiazole + ADP + H(+)</text>
        <dbReference type="Rhea" id="RHEA:24212"/>
        <dbReference type="ChEBI" id="CHEBI:15378"/>
        <dbReference type="ChEBI" id="CHEBI:17957"/>
        <dbReference type="ChEBI" id="CHEBI:30616"/>
        <dbReference type="ChEBI" id="CHEBI:58296"/>
        <dbReference type="ChEBI" id="CHEBI:456216"/>
        <dbReference type="EC" id="2.7.1.50"/>
    </reaction>
</comment>
<comment type="cofactor">
    <cofactor evidence="1">
        <name>Mg(2+)</name>
        <dbReference type="ChEBI" id="CHEBI:18420"/>
    </cofactor>
</comment>
<comment type="pathway">
    <text evidence="1">Cofactor biosynthesis; thiamine diphosphate biosynthesis; 4-methyl-5-(2-phosphoethyl)-thiazole from 5-(2-hydroxyethyl)-4-methylthiazole: step 1/1.</text>
</comment>
<comment type="similarity">
    <text evidence="1">Belongs to the Thz kinase family.</text>
</comment>
<accession>B9E8D6</accession>
<dbReference type="EC" id="2.7.1.50" evidence="1"/>
<dbReference type="EMBL" id="AP009484">
    <property type="protein sequence ID" value="BAH18454.1"/>
    <property type="molecule type" value="Genomic_DNA"/>
</dbReference>
<dbReference type="RefSeq" id="WP_015912246.1">
    <property type="nucleotide sequence ID" value="NC_011999.1"/>
</dbReference>
<dbReference type="SMR" id="B9E8D6"/>
<dbReference type="STRING" id="458233.MCCL_1747"/>
<dbReference type="KEGG" id="mcl:MCCL_1747"/>
<dbReference type="eggNOG" id="COG2145">
    <property type="taxonomic scope" value="Bacteria"/>
</dbReference>
<dbReference type="HOGENOM" id="CLU_019943_0_2_9"/>
<dbReference type="OrthoDB" id="9778146at2"/>
<dbReference type="UniPathway" id="UPA00060">
    <property type="reaction ID" value="UER00139"/>
</dbReference>
<dbReference type="Proteomes" id="UP000001383">
    <property type="component" value="Chromosome"/>
</dbReference>
<dbReference type="GO" id="GO:0005524">
    <property type="term" value="F:ATP binding"/>
    <property type="evidence" value="ECO:0007669"/>
    <property type="project" value="UniProtKB-UniRule"/>
</dbReference>
<dbReference type="GO" id="GO:0004417">
    <property type="term" value="F:hydroxyethylthiazole kinase activity"/>
    <property type="evidence" value="ECO:0007669"/>
    <property type="project" value="UniProtKB-UniRule"/>
</dbReference>
<dbReference type="GO" id="GO:0000287">
    <property type="term" value="F:magnesium ion binding"/>
    <property type="evidence" value="ECO:0007669"/>
    <property type="project" value="UniProtKB-UniRule"/>
</dbReference>
<dbReference type="GO" id="GO:0009228">
    <property type="term" value="P:thiamine biosynthetic process"/>
    <property type="evidence" value="ECO:0007669"/>
    <property type="project" value="UniProtKB-KW"/>
</dbReference>
<dbReference type="GO" id="GO:0009229">
    <property type="term" value="P:thiamine diphosphate biosynthetic process"/>
    <property type="evidence" value="ECO:0007669"/>
    <property type="project" value="UniProtKB-UniRule"/>
</dbReference>
<dbReference type="CDD" id="cd01170">
    <property type="entry name" value="THZ_kinase"/>
    <property type="match status" value="1"/>
</dbReference>
<dbReference type="Gene3D" id="3.40.1190.20">
    <property type="match status" value="1"/>
</dbReference>
<dbReference type="HAMAP" id="MF_00228">
    <property type="entry name" value="Thz_kinase"/>
    <property type="match status" value="1"/>
</dbReference>
<dbReference type="InterPro" id="IPR000417">
    <property type="entry name" value="Hyethyz_kinase"/>
</dbReference>
<dbReference type="InterPro" id="IPR029056">
    <property type="entry name" value="Ribokinase-like"/>
</dbReference>
<dbReference type="NCBIfam" id="NF006830">
    <property type="entry name" value="PRK09355.1"/>
    <property type="match status" value="1"/>
</dbReference>
<dbReference type="Pfam" id="PF02110">
    <property type="entry name" value="HK"/>
    <property type="match status" value="1"/>
</dbReference>
<dbReference type="PIRSF" id="PIRSF000513">
    <property type="entry name" value="Thz_kinase"/>
    <property type="match status" value="1"/>
</dbReference>
<dbReference type="PRINTS" id="PR01099">
    <property type="entry name" value="HYETHTZKNASE"/>
</dbReference>
<dbReference type="SUPFAM" id="SSF53613">
    <property type="entry name" value="Ribokinase-like"/>
    <property type="match status" value="1"/>
</dbReference>
<name>THIM_MACCJ</name>
<organism>
    <name type="scientific">Macrococcus caseolyticus (strain JCSC5402)</name>
    <name type="common">Macrococcoides caseolyticum</name>
    <dbReference type="NCBI Taxonomy" id="458233"/>
    <lineage>
        <taxon>Bacteria</taxon>
        <taxon>Bacillati</taxon>
        <taxon>Bacillota</taxon>
        <taxon>Bacilli</taxon>
        <taxon>Bacillales</taxon>
        <taxon>Staphylococcaceae</taxon>
        <taxon>Macrococcoides</taxon>
    </lineage>
</organism>
<gene>
    <name evidence="1" type="primary">thiM</name>
    <name type="ordered locus">MCCL_1747</name>
</gene>
<sequence length="261" mass="28005">MVKLNQLRKDNPLIICITNDVVKNFTANGLLALGASPAMATERQEMDEFLAHAGALLINIGSIEEGDKENMLQAAAFANKHHVPIVLDPVACGASKFRKDFCLRLLNEHHISIIRGNASELAALTDDATMKGTDADQSLSTESVARRAYDKFKTAIIATGAVDAICQDEQIMLVENGTPMLTKVTGGGCLLGAVVASFIYNETKPSLALLTEAIATYTIAAERAAHSANGTLPGHFAVNLIDQLYLIQQDDIAKESRVKEV</sequence>
<keyword id="KW-0067">ATP-binding</keyword>
<keyword id="KW-0418">Kinase</keyword>
<keyword id="KW-0460">Magnesium</keyword>
<keyword id="KW-0479">Metal-binding</keyword>
<keyword id="KW-0547">Nucleotide-binding</keyword>
<keyword id="KW-1185">Reference proteome</keyword>
<keyword id="KW-0784">Thiamine biosynthesis</keyword>
<keyword id="KW-0808">Transferase</keyword>